<keyword id="KW-0067">ATP-binding</keyword>
<keyword id="KW-0143">Chaperone</keyword>
<keyword id="KW-0547">Nucleotide-binding</keyword>
<comment type="function">
    <text evidence="1">Chaperone involved in the maturation of iron-sulfur cluster-containing proteins. Has a low intrinsic ATPase activity which is markedly stimulated by HscB.</text>
</comment>
<comment type="similarity">
    <text evidence="1">Belongs to the heat shock protein 70 family.</text>
</comment>
<organism>
    <name type="scientific">Burkholderia mallei (strain SAVP1)</name>
    <dbReference type="NCBI Taxonomy" id="320388"/>
    <lineage>
        <taxon>Bacteria</taxon>
        <taxon>Pseudomonadati</taxon>
        <taxon>Pseudomonadota</taxon>
        <taxon>Betaproteobacteria</taxon>
        <taxon>Burkholderiales</taxon>
        <taxon>Burkholderiaceae</taxon>
        <taxon>Burkholderia</taxon>
        <taxon>pseudomallei group</taxon>
    </lineage>
</organism>
<gene>
    <name evidence="1" type="primary">hscA</name>
    <name type="ordered locus">BMASAVP1_A2213</name>
</gene>
<feature type="chain" id="PRO_1000044848" description="Chaperone protein HscA homolog">
    <location>
        <begin position="1"/>
        <end position="622"/>
    </location>
</feature>
<name>HSCA_BURMS</name>
<dbReference type="EMBL" id="CP000526">
    <property type="protein sequence ID" value="ABM50174.1"/>
    <property type="molecule type" value="Genomic_DNA"/>
</dbReference>
<dbReference type="RefSeq" id="WP_004193590.1">
    <property type="nucleotide sequence ID" value="NC_008785.1"/>
</dbReference>
<dbReference type="SMR" id="A1V5M2"/>
<dbReference type="GeneID" id="92979425"/>
<dbReference type="KEGG" id="bmv:BMASAVP1_A2213"/>
<dbReference type="HOGENOM" id="CLU_005965_2_1_4"/>
<dbReference type="GO" id="GO:0005524">
    <property type="term" value="F:ATP binding"/>
    <property type="evidence" value="ECO:0007669"/>
    <property type="project" value="UniProtKB-KW"/>
</dbReference>
<dbReference type="GO" id="GO:0016887">
    <property type="term" value="F:ATP hydrolysis activity"/>
    <property type="evidence" value="ECO:0007669"/>
    <property type="project" value="UniProtKB-UniRule"/>
</dbReference>
<dbReference type="GO" id="GO:0140662">
    <property type="term" value="F:ATP-dependent protein folding chaperone"/>
    <property type="evidence" value="ECO:0007669"/>
    <property type="project" value="InterPro"/>
</dbReference>
<dbReference type="GO" id="GO:0051082">
    <property type="term" value="F:unfolded protein binding"/>
    <property type="evidence" value="ECO:0007669"/>
    <property type="project" value="InterPro"/>
</dbReference>
<dbReference type="GO" id="GO:0016226">
    <property type="term" value="P:iron-sulfur cluster assembly"/>
    <property type="evidence" value="ECO:0007669"/>
    <property type="project" value="InterPro"/>
</dbReference>
<dbReference type="FunFam" id="3.30.420.40:FF:000046">
    <property type="entry name" value="Chaperone protein HscA"/>
    <property type="match status" value="1"/>
</dbReference>
<dbReference type="FunFam" id="2.60.34.10:FF:000005">
    <property type="entry name" value="Chaperone protein HscA homolog"/>
    <property type="match status" value="1"/>
</dbReference>
<dbReference type="Gene3D" id="1.20.1270.10">
    <property type="match status" value="1"/>
</dbReference>
<dbReference type="Gene3D" id="3.30.420.40">
    <property type="match status" value="2"/>
</dbReference>
<dbReference type="Gene3D" id="3.90.640.10">
    <property type="entry name" value="Actin, Chain A, domain 4"/>
    <property type="match status" value="1"/>
</dbReference>
<dbReference type="Gene3D" id="2.60.34.10">
    <property type="entry name" value="Substrate Binding Domain Of DNAk, Chain A, domain 1"/>
    <property type="match status" value="1"/>
</dbReference>
<dbReference type="HAMAP" id="MF_00679">
    <property type="entry name" value="HscA"/>
    <property type="match status" value="1"/>
</dbReference>
<dbReference type="InterPro" id="IPR043129">
    <property type="entry name" value="ATPase_NBD"/>
</dbReference>
<dbReference type="InterPro" id="IPR018181">
    <property type="entry name" value="Heat_shock_70_CS"/>
</dbReference>
<dbReference type="InterPro" id="IPR029048">
    <property type="entry name" value="HSP70_C_sf"/>
</dbReference>
<dbReference type="InterPro" id="IPR029047">
    <property type="entry name" value="HSP70_peptide-bd_sf"/>
</dbReference>
<dbReference type="InterPro" id="IPR013126">
    <property type="entry name" value="Hsp_70_fam"/>
</dbReference>
<dbReference type="InterPro" id="IPR010236">
    <property type="entry name" value="ISC_FeS_clus_asmbl_HscA"/>
</dbReference>
<dbReference type="NCBIfam" id="TIGR01991">
    <property type="entry name" value="HscA"/>
    <property type="match status" value="1"/>
</dbReference>
<dbReference type="NCBIfam" id="NF003520">
    <property type="entry name" value="PRK05183.1"/>
    <property type="match status" value="1"/>
</dbReference>
<dbReference type="PANTHER" id="PTHR19375">
    <property type="entry name" value="HEAT SHOCK PROTEIN 70KDA"/>
    <property type="match status" value="1"/>
</dbReference>
<dbReference type="Pfam" id="PF00012">
    <property type="entry name" value="HSP70"/>
    <property type="match status" value="1"/>
</dbReference>
<dbReference type="PRINTS" id="PR00301">
    <property type="entry name" value="HEATSHOCK70"/>
</dbReference>
<dbReference type="SUPFAM" id="SSF53067">
    <property type="entry name" value="Actin-like ATPase domain"/>
    <property type="match status" value="2"/>
</dbReference>
<dbReference type="SUPFAM" id="SSF100934">
    <property type="entry name" value="Heat shock protein 70kD (HSP70), C-terminal subdomain"/>
    <property type="match status" value="1"/>
</dbReference>
<dbReference type="SUPFAM" id="SSF100920">
    <property type="entry name" value="Heat shock protein 70kD (HSP70), peptide-binding domain"/>
    <property type="match status" value="1"/>
</dbReference>
<dbReference type="PROSITE" id="PS00297">
    <property type="entry name" value="HSP70_1"/>
    <property type="match status" value="1"/>
</dbReference>
<dbReference type="PROSITE" id="PS00329">
    <property type="entry name" value="HSP70_2"/>
    <property type="match status" value="1"/>
</dbReference>
<dbReference type="PROSITE" id="PS01036">
    <property type="entry name" value="HSP70_3"/>
    <property type="match status" value="1"/>
</dbReference>
<accession>A1V5M2</accession>
<protein>
    <recommendedName>
        <fullName evidence="1">Chaperone protein HscA homolog</fullName>
    </recommendedName>
</protein>
<reference key="1">
    <citation type="journal article" date="2010" name="Genome Biol. Evol.">
        <title>Continuing evolution of Burkholderia mallei through genome reduction and large-scale rearrangements.</title>
        <authorList>
            <person name="Losada L."/>
            <person name="Ronning C.M."/>
            <person name="DeShazer D."/>
            <person name="Woods D."/>
            <person name="Fedorova N."/>
            <person name="Kim H.S."/>
            <person name="Shabalina S.A."/>
            <person name="Pearson T.R."/>
            <person name="Brinkac L."/>
            <person name="Tan P."/>
            <person name="Nandi T."/>
            <person name="Crabtree J."/>
            <person name="Badger J."/>
            <person name="Beckstrom-Sternberg S."/>
            <person name="Saqib M."/>
            <person name="Schutzer S.E."/>
            <person name="Keim P."/>
            <person name="Nierman W.C."/>
        </authorList>
    </citation>
    <scope>NUCLEOTIDE SEQUENCE [LARGE SCALE GENOMIC DNA]</scope>
    <source>
        <strain>SAVP1</strain>
    </source>
</reference>
<sequence length="622" mass="65796">MALLQISEPGMAPAPHQRRLAVGIDLGTTNSLVAAVRNSIPEALPDDAGRVLLPSVVRYLDKGGRRIGHAAKEEAAIDPRNTIVSVKRFMGRGKAEVEGAANAPYEFVDAPGMVQIRTVDGVKSPVEVSAEILATLRQRAEDTLGDDLVGAVITVPAYFDDAQRQATKDAARLAGLNVLRLLNEPTAAAIAYGLDNGAEGLYAVYDLGGGTFDLSILKLTKGVFEVLAAGGDSALGGDDFDHLLFEHVLAQAGLEVAALAPEDVRLLLDRVRGAKEALSAAPQARVDVKLSTGEKLAQTITRDTFAALVEPLVQRTLGPTRKALRDAQVSAADIKGVVLVGGATRMPVIRDAVAKYFGQPPLVNLDPDQVVALGAAIQADLLAGNRSGGDDWLLLDVIPLSLGVETMGGLVEKIIPRNSTIPVARAQEFTTFKDGQTAMAIHVVQGERELVSDCRSLARFELRGIPPMTAGAARIRVTYQVDADGLLSVFAREQHSGVEASVVVKPSYGLGDDDIARMLEDSFKTAEVDMRARALREAQVEAQRLVEATEAALVADGDLLDASERATVDALVASLRALAPGDDADAIDTATKALAEGTDEFAARRMDKSIKRALAGRKLDEI</sequence>
<evidence type="ECO:0000255" key="1">
    <source>
        <dbReference type="HAMAP-Rule" id="MF_00679"/>
    </source>
</evidence>
<proteinExistence type="inferred from homology"/>